<sequence>MPRVKRGFKARRRRNKVLKLAKGYRGARSKLFRSATEAVDRALNYAFRDRRVKKRDFRALWIARINASARENGLSYSRLVHGLKKAEIALDRKILAELAVTDPAGFTAIADKAKAQLQ</sequence>
<reference key="1">
    <citation type="submission" date="2005-10" db="EMBL/GenBank/DDBJ databases">
        <title>Complete sequence of Pelobacter carbinolicus DSM 2380.</title>
        <authorList>
            <person name="Copeland A."/>
            <person name="Lucas S."/>
            <person name="Lapidus A."/>
            <person name="Barry K."/>
            <person name="Detter J.C."/>
            <person name="Glavina T."/>
            <person name="Hammon N."/>
            <person name="Israni S."/>
            <person name="Pitluck S."/>
            <person name="Chertkov O."/>
            <person name="Schmutz J."/>
            <person name="Larimer F."/>
            <person name="Land M."/>
            <person name="Kyrpides N."/>
            <person name="Ivanova N."/>
            <person name="Richardson P."/>
        </authorList>
    </citation>
    <scope>NUCLEOTIDE SEQUENCE [LARGE SCALE GENOMIC DNA]</scope>
    <source>
        <strain>DSM 2380 / NBRC 103641 / GraBd1</strain>
    </source>
</reference>
<organism>
    <name type="scientific">Syntrophotalea carbinolica (strain DSM 2380 / NBRC 103641 / GraBd1)</name>
    <name type="common">Pelobacter carbinolicus</name>
    <dbReference type="NCBI Taxonomy" id="338963"/>
    <lineage>
        <taxon>Bacteria</taxon>
        <taxon>Pseudomonadati</taxon>
        <taxon>Thermodesulfobacteriota</taxon>
        <taxon>Desulfuromonadia</taxon>
        <taxon>Desulfuromonadales</taxon>
        <taxon>Syntrophotaleaceae</taxon>
        <taxon>Syntrophotalea</taxon>
    </lineage>
</organism>
<dbReference type="EMBL" id="CP000142">
    <property type="protein sequence ID" value="ABA88667.1"/>
    <property type="molecule type" value="Genomic_DNA"/>
</dbReference>
<dbReference type="RefSeq" id="WP_011341150.1">
    <property type="nucleotide sequence ID" value="NC_007498.2"/>
</dbReference>
<dbReference type="SMR" id="Q3A4P0"/>
<dbReference type="STRING" id="338963.Pcar_1421"/>
<dbReference type="KEGG" id="pca:Pcar_1421"/>
<dbReference type="eggNOG" id="COG0292">
    <property type="taxonomic scope" value="Bacteria"/>
</dbReference>
<dbReference type="HOGENOM" id="CLU_123265_0_1_7"/>
<dbReference type="OrthoDB" id="9808966at2"/>
<dbReference type="Proteomes" id="UP000002534">
    <property type="component" value="Chromosome"/>
</dbReference>
<dbReference type="GO" id="GO:1990904">
    <property type="term" value="C:ribonucleoprotein complex"/>
    <property type="evidence" value="ECO:0007669"/>
    <property type="project" value="UniProtKB-KW"/>
</dbReference>
<dbReference type="GO" id="GO:0005840">
    <property type="term" value="C:ribosome"/>
    <property type="evidence" value="ECO:0007669"/>
    <property type="project" value="UniProtKB-KW"/>
</dbReference>
<dbReference type="GO" id="GO:0019843">
    <property type="term" value="F:rRNA binding"/>
    <property type="evidence" value="ECO:0007669"/>
    <property type="project" value="UniProtKB-UniRule"/>
</dbReference>
<dbReference type="GO" id="GO:0003735">
    <property type="term" value="F:structural constituent of ribosome"/>
    <property type="evidence" value="ECO:0007669"/>
    <property type="project" value="InterPro"/>
</dbReference>
<dbReference type="GO" id="GO:0000027">
    <property type="term" value="P:ribosomal large subunit assembly"/>
    <property type="evidence" value="ECO:0007669"/>
    <property type="project" value="UniProtKB-UniRule"/>
</dbReference>
<dbReference type="GO" id="GO:0006412">
    <property type="term" value="P:translation"/>
    <property type="evidence" value="ECO:0007669"/>
    <property type="project" value="InterPro"/>
</dbReference>
<dbReference type="CDD" id="cd07026">
    <property type="entry name" value="Ribosomal_L20"/>
    <property type="match status" value="1"/>
</dbReference>
<dbReference type="FunFam" id="1.10.1900.20:FF:000001">
    <property type="entry name" value="50S ribosomal protein L20"/>
    <property type="match status" value="1"/>
</dbReference>
<dbReference type="Gene3D" id="6.10.160.10">
    <property type="match status" value="1"/>
</dbReference>
<dbReference type="Gene3D" id="1.10.1900.20">
    <property type="entry name" value="Ribosomal protein L20"/>
    <property type="match status" value="1"/>
</dbReference>
<dbReference type="HAMAP" id="MF_00382">
    <property type="entry name" value="Ribosomal_bL20"/>
    <property type="match status" value="1"/>
</dbReference>
<dbReference type="InterPro" id="IPR005813">
    <property type="entry name" value="Ribosomal_bL20"/>
</dbReference>
<dbReference type="InterPro" id="IPR049946">
    <property type="entry name" value="RIBOSOMAL_L20_CS"/>
</dbReference>
<dbReference type="InterPro" id="IPR035566">
    <property type="entry name" value="Ribosomal_protein_bL20_C"/>
</dbReference>
<dbReference type="NCBIfam" id="TIGR01032">
    <property type="entry name" value="rplT_bact"/>
    <property type="match status" value="1"/>
</dbReference>
<dbReference type="PANTHER" id="PTHR10986">
    <property type="entry name" value="39S RIBOSOMAL PROTEIN L20"/>
    <property type="match status" value="1"/>
</dbReference>
<dbReference type="Pfam" id="PF00453">
    <property type="entry name" value="Ribosomal_L20"/>
    <property type="match status" value="1"/>
</dbReference>
<dbReference type="PRINTS" id="PR00062">
    <property type="entry name" value="RIBOSOMALL20"/>
</dbReference>
<dbReference type="SUPFAM" id="SSF74731">
    <property type="entry name" value="Ribosomal protein L20"/>
    <property type="match status" value="1"/>
</dbReference>
<dbReference type="PROSITE" id="PS00937">
    <property type="entry name" value="RIBOSOMAL_L20"/>
    <property type="match status" value="1"/>
</dbReference>
<keyword id="KW-1185">Reference proteome</keyword>
<keyword id="KW-0687">Ribonucleoprotein</keyword>
<keyword id="KW-0689">Ribosomal protein</keyword>
<keyword id="KW-0694">RNA-binding</keyword>
<keyword id="KW-0699">rRNA-binding</keyword>
<comment type="function">
    <text evidence="1">Binds directly to 23S ribosomal RNA and is necessary for the in vitro assembly process of the 50S ribosomal subunit. It is not involved in the protein synthesizing functions of that subunit.</text>
</comment>
<comment type="similarity">
    <text evidence="1">Belongs to the bacterial ribosomal protein bL20 family.</text>
</comment>
<gene>
    <name evidence="1" type="primary">rplT</name>
    <name type="ordered locus">Pcar_1421</name>
</gene>
<feature type="chain" id="PRO_0000243711" description="Large ribosomal subunit protein bL20">
    <location>
        <begin position="1"/>
        <end position="118"/>
    </location>
</feature>
<protein>
    <recommendedName>
        <fullName evidence="1">Large ribosomal subunit protein bL20</fullName>
    </recommendedName>
    <alternativeName>
        <fullName evidence="2">50S ribosomal protein L20</fullName>
    </alternativeName>
</protein>
<evidence type="ECO:0000255" key="1">
    <source>
        <dbReference type="HAMAP-Rule" id="MF_00382"/>
    </source>
</evidence>
<evidence type="ECO:0000305" key="2"/>
<accession>Q3A4P0</accession>
<proteinExistence type="inferred from homology"/>
<name>RL20_SYNC1</name>